<comment type="subunit">
    <text evidence="1">Interacts with the 40S ribosomal subunit.</text>
</comment>
<comment type="subcellular location">
    <subcellularLocation>
        <location evidence="1">Cytoplasm</location>
    </subcellularLocation>
</comment>
<comment type="domain">
    <text>The SUI1 domain may be involved in RNA binding.</text>
</comment>
<comment type="similarity">
    <text evidence="4">Belongs to the DENR family.</text>
</comment>
<reference key="1">
    <citation type="journal article" date="2002" name="Nature">
        <title>The genome sequence of Schizosaccharomyces pombe.</title>
        <authorList>
            <person name="Wood V."/>
            <person name="Gwilliam R."/>
            <person name="Rajandream M.A."/>
            <person name="Lyne M.H."/>
            <person name="Lyne R."/>
            <person name="Stewart A."/>
            <person name="Sgouros J.G."/>
            <person name="Peat N."/>
            <person name="Hayles J."/>
            <person name="Baker S.G."/>
            <person name="Basham D."/>
            <person name="Bowman S."/>
            <person name="Brooks K."/>
            <person name="Brown D."/>
            <person name="Brown S."/>
            <person name="Chillingworth T."/>
            <person name="Churcher C.M."/>
            <person name="Collins M."/>
            <person name="Connor R."/>
            <person name="Cronin A."/>
            <person name="Davis P."/>
            <person name="Feltwell T."/>
            <person name="Fraser A."/>
            <person name="Gentles S."/>
            <person name="Goble A."/>
            <person name="Hamlin N."/>
            <person name="Harris D.E."/>
            <person name="Hidalgo J."/>
            <person name="Hodgson G."/>
            <person name="Holroyd S."/>
            <person name="Hornsby T."/>
            <person name="Howarth S."/>
            <person name="Huckle E.J."/>
            <person name="Hunt S."/>
            <person name="Jagels K."/>
            <person name="James K.D."/>
            <person name="Jones L."/>
            <person name="Jones M."/>
            <person name="Leather S."/>
            <person name="McDonald S."/>
            <person name="McLean J."/>
            <person name="Mooney P."/>
            <person name="Moule S."/>
            <person name="Mungall K.L."/>
            <person name="Murphy L.D."/>
            <person name="Niblett D."/>
            <person name="Odell C."/>
            <person name="Oliver K."/>
            <person name="O'Neil S."/>
            <person name="Pearson D."/>
            <person name="Quail M.A."/>
            <person name="Rabbinowitsch E."/>
            <person name="Rutherford K.M."/>
            <person name="Rutter S."/>
            <person name="Saunders D."/>
            <person name="Seeger K."/>
            <person name="Sharp S."/>
            <person name="Skelton J."/>
            <person name="Simmonds M.N."/>
            <person name="Squares R."/>
            <person name="Squares S."/>
            <person name="Stevens K."/>
            <person name="Taylor K."/>
            <person name="Taylor R.G."/>
            <person name="Tivey A."/>
            <person name="Walsh S.V."/>
            <person name="Warren T."/>
            <person name="Whitehead S."/>
            <person name="Woodward J.R."/>
            <person name="Volckaert G."/>
            <person name="Aert R."/>
            <person name="Robben J."/>
            <person name="Grymonprez B."/>
            <person name="Weltjens I."/>
            <person name="Vanstreels E."/>
            <person name="Rieger M."/>
            <person name="Schaefer M."/>
            <person name="Mueller-Auer S."/>
            <person name="Gabel C."/>
            <person name="Fuchs M."/>
            <person name="Duesterhoeft A."/>
            <person name="Fritzc C."/>
            <person name="Holzer E."/>
            <person name="Moestl D."/>
            <person name="Hilbert H."/>
            <person name="Borzym K."/>
            <person name="Langer I."/>
            <person name="Beck A."/>
            <person name="Lehrach H."/>
            <person name="Reinhardt R."/>
            <person name="Pohl T.M."/>
            <person name="Eger P."/>
            <person name="Zimmermann W."/>
            <person name="Wedler H."/>
            <person name="Wambutt R."/>
            <person name="Purnelle B."/>
            <person name="Goffeau A."/>
            <person name="Cadieu E."/>
            <person name="Dreano S."/>
            <person name="Gloux S."/>
            <person name="Lelaure V."/>
            <person name="Mottier S."/>
            <person name="Galibert F."/>
            <person name="Aves S.J."/>
            <person name="Xiang Z."/>
            <person name="Hunt C."/>
            <person name="Moore K."/>
            <person name="Hurst S.M."/>
            <person name="Lucas M."/>
            <person name="Rochet M."/>
            <person name="Gaillardin C."/>
            <person name="Tallada V.A."/>
            <person name="Garzon A."/>
            <person name="Thode G."/>
            <person name="Daga R.R."/>
            <person name="Cruzado L."/>
            <person name="Jimenez J."/>
            <person name="Sanchez M."/>
            <person name="del Rey F."/>
            <person name="Benito J."/>
            <person name="Dominguez A."/>
            <person name="Revuelta J.L."/>
            <person name="Moreno S."/>
            <person name="Armstrong J."/>
            <person name="Forsburg S.L."/>
            <person name="Cerutti L."/>
            <person name="Lowe T."/>
            <person name="McCombie W.R."/>
            <person name="Paulsen I."/>
            <person name="Potashkin J."/>
            <person name="Shpakovski G.V."/>
            <person name="Ussery D."/>
            <person name="Barrell B.G."/>
            <person name="Nurse P."/>
        </authorList>
    </citation>
    <scope>NUCLEOTIDE SEQUENCE [LARGE SCALE GENOMIC DNA]</scope>
    <source>
        <strain>972 / ATCC 24843</strain>
    </source>
</reference>
<keyword id="KW-0963">Cytoplasm</keyword>
<keyword id="KW-1185">Reference proteome</keyword>
<accession>O42929</accession>
<protein>
    <recommendedName>
        <fullName>Translation machinery-associated protein 22</fullName>
    </recommendedName>
    <alternativeName>
        <fullName>Density-regulated protein homolog</fullName>
    </alternativeName>
</protein>
<organism>
    <name type="scientific">Schizosaccharomyces pombe (strain 972 / ATCC 24843)</name>
    <name type="common">Fission yeast</name>
    <dbReference type="NCBI Taxonomy" id="284812"/>
    <lineage>
        <taxon>Eukaryota</taxon>
        <taxon>Fungi</taxon>
        <taxon>Dikarya</taxon>
        <taxon>Ascomycota</taxon>
        <taxon>Taphrinomycotina</taxon>
        <taxon>Schizosaccharomycetes</taxon>
        <taxon>Schizosaccharomycetales</taxon>
        <taxon>Schizosaccharomycetaceae</taxon>
        <taxon>Schizosaccharomyces</taxon>
    </lineage>
</organism>
<name>DENR_SCHPO</name>
<sequence length="190" mass="21633">MASQTIPKLKSVLYCDVCTLPVEYCEFEGTLKKCKEWLKSSHPDVYDKLYGEQDLSKDLENTLNVSGTKDSNAEEQPAKLTKEEKRVEREEAKRMASKVLIKTIERTKRKRVTTVQGLDAFGIETKKAAKMLANKFATGASVTKTADKKDEIVVQGDLNYDIFDFILEKFKEVPEDNIKIVEDTKSKKKQ</sequence>
<evidence type="ECO:0000250" key="1"/>
<evidence type="ECO:0000255" key="2">
    <source>
        <dbReference type="PROSITE-ProRule" id="PRU00200"/>
    </source>
</evidence>
<evidence type="ECO:0000256" key="3">
    <source>
        <dbReference type="SAM" id="MobiDB-lite"/>
    </source>
</evidence>
<evidence type="ECO:0000305" key="4"/>
<feature type="chain" id="PRO_0000130608" description="Translation machinery-associated protein 22">
    <location>
        <begin position="1"/>
        <end position="190"/>
    </location>
</feature>
<feature type="domain" description="SUI1" evidence="2">
    <location>
        <begin position="99"/>
        <end position="170"/>
    </location>
</feature>
<feature type="region of interest" description="Disordered" evidence="3">
    <location>
        <begin position="63"/>
        <end position="83"/>
    </location>
</feature>
<dbReference type="EMBL" id="CU329671">
    <property type="protein sequence ID" value="CAA16913.1"/>
    <property type="molecule type" value="Genomic_DNA"/>
</dbReference>
<dbReference type="PIR" id="T39556">
    <property type="entry name" value="T39556"/>
</dbReference>
<dbReference type="RefSeq" id="NP_596803.1">
    <property type="nucleotide sequence ID" value="NM_001023824.2"/>
</dbReference>
<dbReference type="SMR" id="O42929"/>
<dbReference type="BioGRID" id="276690">
    <property type="interactions" value="84"/>
</dbReference>
<dbReference type="FunCoup" id="O42929">
    <property type="interactions" value="718"/>
</dbReference>
<dbReference type="STRING" id="284812.O42929"/>
<dbReference type="iPTMnet" id="O42929"/>
<dbReference type="PaxDb" id="4896-SPBC16C6.05.1"/>
<dbReference type="EnsemblFungi" id="SPBC16C6.05.1">
    <property type="protein sequence ID" value="SPBC16C6.05.1:pep"/>
    <property type="gene ID" value="SPBC16C6.05"/>
</dbReference>
<dbReference type="GeneID" id="2540154"/>
<dbReference type="KEGG" id="spo:2540154"/>
<dbReference type="PomBase" id="SPBC16C6.05">
    <property type="gene designation" value="tma22"/>
</dbReference>
<dbReference type="VEuPathDB" id="FungiDB:SPBC16C6.05"/>
<dbReference type="eggNOG" id="KOG3239">
    <property type="taxonomic scope" value="Eukaryota"/>
</dbReference>
<dbReference type="HOGENOM" id="CLU_073511_0_1_1"/>
<dbReference type="InParanoid" id="O42929"/>
<dbReference type="OMA" id="EVFEIDM"/>
<dbReference type="PhylomeDB" id="O42929"/>
<dbReference type="PRO" id="PR:O42929"/>
<dbReference type="Proteomes" id="UP000002485">
    <property type="component" value="Chromosome II"/>
</dbReference>
<dbReference type="GO" id="GO:0005829">
    <property type="term" value="C:cytosol"/>
    <property type="evidence" value="ECO:0000266"/>
    <property type="project" value="PomBase"/>
</dbReference>
<dbReference type="GO" id="GO:0003743">
    <property type="term" value="F:translation initiation factor activity"/>
    <property type="evidence" value="ECO:0007669"/>
    <property type="project" value="InterPro"/>
</dbReference>
<dbReference type="GO" id="GO:0001731">
    <property type="term" value="P:formation of translation preinitiation complex"/>
    <property type="evidence" value="ECO:0000318"/>
    <property type="project" value="GO_Central"/>
</dbReference>
<dbReference type="GO" id="GO:0002188">
    <property type="term" value="P:translation reinitiation"/>
    <property type="evidence" value="ECO:0000318"/>
    <property type="project" value="GO_Central"/>
</dbReference>
<dbReference type="CDD" id="cd11607">
    <property type="entry name" value="DENR_C"/>
    <property type="match status" value="1"/>
</dbReference>
<dbReference type="Gene3D" id="3.30.780.10">
    <property type="entry name" value="SUI1-like domain"/>
    <property type="match status" value="1"/>
</dbReference>
<dbReference type="InterPro" id="IPR050318">
    <property type="entry name" value="DENR/SUI1_TIF"/>
</dbReference>
<dbReference type="InterPro" id="IPR046447">
    <property type="entry name" value="DENR_C"/>
</dbReference>
<dbReference type="InterPro" id="IPR005873">
    <property type="entry name" value="DENR_eukaryotes"/>
</dbReference>
<dbReference type="InterPro" id="IPR048517">
    <property type="entry name" value="DENR_N"/>
</dbReference>
<dbReference type="InterPro" id="IPR001950">
    <property type="entry name" value="SUI1"/>
</dbReference>
<dbReference type="InterPro" id="IPR036877">
    <property type="entry name" value="SUI1_dom_sf"/>
</dbReference>
<dbReference type="NCBIfam" id="TIGR01159">
    <property type="entry name" value="DRP1"/>
    <property type="match status" value="1"/>
</dbReference>
<dbReference type="PANTHER" id="PTHR12789:SF0">
    <property type="entry name" value="DENSITY-REGULATED PROTEIN"/>
    <property type="match status" value="1"/>
</dbReference>
<dbReference type="PANTHER" id="PTHR12789">
    <property type="entry name" value="DENSITY-REGULATED PROTEIN HOMOLOG"/>
    <property type="match status" value="1"/>
</dbReference>
<dbReference type="Pfam" id="PF21023">
    <property type="entry name" value="DENR_N"/>
    <property type="match status" value="1"/>
</dbReference>
<dbReference type="Pfam" id="PF01253">
    <property type="entry name" value="SUI1"/>
    <property type="match status" value="1"/>
</dbReference>
<dbReference type="SUPFAM" id="SSF55159">
    <property type="entry name" value="eIF1-like"/>
    <property type="match status" value="1"/>
</dbReference>
<dbReference type="PROSITE" id="PS50296">
    <property type="entry name" value="SUI1"/>
    <property type="match status" value="1"/>
</dbReference>
<gene>
    <name type="primary">tma22</name>
    <name type="ORF">SPBC16C6.05</name>
</gene>
<proteinExistence type="inferred from homology"/>